<reference key="1">
    <citation type="journal article" date="2006" name="Genome Res.">
        <title>Skewed genomic variability in strains of the toxigenic bacterial pathogen, Clostridium perfringens.</title>
        <authorList>
            <person name="Myers G.S.A."/>
            <person name="Rasko D.A."/>
            <person name="Cheung J.K."/>
            <person name="Ravel J."/>
            <person name="Seshadri R."/>
            <person name="DeBoy R.T."/>
            <person name="Ren Q."/>
            <person name="Varga J."/>
            <person name="Awad M.M."/>
            <person name="Brinkac L.M."/>
            <person name="Daugherty S.C."/>
            <person name="Haft D.H."/>
            <person name="Dodson R.J."/>
            <person name="Madupu R."/>
            <person name="Nelson W.C."/>
            <person name="Rosovitz M.J."/>
            <person name="Sullivan S.A."/>
            <person name="Khouri H."/>
            <person name="Dimitrov G.I."/>
            <person name="Watkins K.L."/>
            <person name="Mulligan S."/>
            <person name="Benton J."/>
            <person name="Radune D."/>
            <person name="Fisher D.J."/>
            <person name="Atkins H.S."/>
            <person name="Hiscox T."/>
            <person name="Jost B.H."/>
            <person name="Billington S.J."/>
            <person name="Songer J.G."/>
            <person name="McClane B.A."/>
            <person name="Titball R.W."/>
            <person name="Rood J.I."/>
            <person name="Melville S.B."/>
            <person name="Paulsen I.T."/>
        </authorList>
    </citation>
    <scope>NUCLEOTIDE SEQUENCE [LARGE SCALE GENOMIC DNA]</scope>
    <source>
        <strain>ATCC 13124 / DSM 756 / JCM 1290 / NCIMB 6125 / NCTC 8237 / S 107 / Type A</strain>
    </source>
</reference>
<protein>
    <recommendedName>
        <fullName evidence="1">Peptide methionine sulfoxide reductase MsrA</fullName>
        <shortName evidence="1">Protein-methionine-S-oxide reductase</shortName>
        <ecNumber evidence="1">1.8.4.11</ecNumber>
    </recommendedName>
    <alternativeName>
        <fullName evidence="1">Peptide-methionine (S)-S-oxide reductase</fullName>
        <shortName evidence="1">Peptide Met(O) reductase</shortName>
    </alternativeName>
</protein>
<proteinExistence type="inferred from homology"/>
<name>MSRA_CLOP1</name>
<gene>
    <name evidence="1" type="primary">msrA</name>
    <name type="ordered locus">CPF_2913</name>
</gene>
<sequence length="157" mass="18117">MKKIILAGGCFWGVEEFLSRINGVVSTEVGYANGRTENPTYEDICTKNTYFAEVCLVNYDENIISLKELLAKFWTIIDPTSLNKQGNDVGSQYRTGIYYVDPSDLEEILNSKEELQKSYSKKIVTEVKPLENYYKAEEYHQKYLKKNPNGYCHIKLD</sequence>
<organism>
    <name type="scientific">Clostridium perfringens (strain ATCC 13124 / DSM 756 / JCM 1290 / NCIMB 6125 / NCTC 8237 / Type A)</name>
    <dbReference type="NCBI Taxonomy" id="195103"/>
    <lineage>
        <taxon>Bacteria</taxon>
        <taxon>Bacillati</taxon>
        <taxon>Bacillota</taxon>
        <taxon>Clostridia</taxon>
        <taxon>Eubacteriales</taxon>
        <taxon>Clostridiaceae</taxon>
        <taxon>Clostridium</taxon>
    </lineage>
</organism>
<evidence type="ECO:0000255" key="1">
    <source>
        <dbReference type="HAMAP-Rule" id="MF_01401"/>
    </source>
</evidence>
<accession>Q0TM63</accession>
<comment type="function">
    <text evidence="1">Has an important function as a repair enzyme for proteins that have been inactivated by oxidation. Catalyzes the reversible oxidation-reduction of methionine sulfoxide in proteins to methionine.</text>
</comment>
<comment type="catalytic activity">
    <reaction evidence="1">
        <text>L-methionyl-[protein] + [thioredoxin]-disulfide + H2O = L-methionyl-(S)-S-oxide-[protein] + [thioredoxin]-dithiol</text>
        <dbReference type="Rhea" id="RHEA:14217"/>
        <dbReference type="Rhea" id="RHEA-COMP:10698"/>
        <dbReference type="Rhea" id="RHEA-COMP:10700"/>
        <dbReference type="Rhea" id="RHEA-COMP:12313"/>
        <dbReference type="Rhea" id="RHEA-COMP:12315"/>
        <dbReference type="ChEBI" id="CHEBI:15377"/>
        <dbReference type="ChEBI" id="CHEBI:16044"/>
        <dbReference type="ChEBI" id="CHEBI:29950"/>
        <dbReference type="ChEBI" id="CHEBI:44120"/>
        <dbReference type="ChEBI" id="CHEBI:50058"/>
        <dbReference type="EC" id="1.8.4.11"/>
    </reaction>
</comment>
<comment type="catalytic activity">
    <reaction evidence="1">
        <text>[thioredoxin]-disulfide + L-methionine + H2O = L-methionine (S)-S-oxide + [thioredoxin]-dithiol</text>
        <dbReference type="Rhea" id="RHEA:19993"/>
        <dbReference type="Rhea" id="RHEA-COMP:10698"/>
        <dbReference type="Rhea" id="RHEA-COMP:10700"/>
        <dbReference type="ChEBI" id="CHEBI:15377"/>
        <dbReference type="ChEBI" id="CHEBI:29950"/>
        <dbReference type="ChEBI" id="CHEBI:50058"/>
        <dbReference type="ChEBI" id="CHEBI:57844"/>
        <dbReference type="ChEBI" id="CHEBI:58772"/>
        <dbReference type="EC" id="1.8.4.11"/>
    </reaction>
</comment>
<comment type="similarity">
    <text evidence="1">Belongs to the MsrA Met sulfoxide reductase family.</text>
</comment>
<keyword id="KW-0560">Oxidoreductase</keyword>
<feature type="chain" id="PRO_1000068321" description="Peptide methionine sulfoxide reductase MsrA">
    <location>
        <begin position="1"/>
        <end position="157"/>
    </location>
</feature>
<feature type="active site" evidence="1">
    <location>
        <position position="10"/>
    </location>
</feature>
<dbReference type="EC" id="1.8.4.11" evidence="1"/>
<dbReference type="EMBL" id="CP000246">
    <property type="protein sequence ID" value="ABG83263.1"/>
    <property type="molecule type" value="Genomic_DNA"/>
</dbReference>
<dbReference type="RefSeq" id="WP_003479367.1">
    <property type="nucleotide sequence ID" value="NC_008261.1"/>
</dbReference>
<dbReference type="SMR" id="Q0TM63"/>
<dbReference type="STRING" id="195103.CPF_2913"/>
<dbReference type="PaxDb" id="195103-CPF_2913"/>
<dbReference type="GeneID" id="93000808"/>
<dbReference type="KEGG" id="cpf:CPF_2913"/>
<dbReference type="eggNOG" id="COG0225">
    <property type="taxonomic scope" value="Bacteria"/>
</dbReference>
<dbReference type="HOGENOM" id="CLU_031040_10_2_9"/>
<dbReference type="Proteomes" id="UP000001823">
    <property type="component" value="Chromosome"/>
</dbReference>
<dbReference type="GO" id="GO:0005737">
    <property type="term" value="C:cytoplasm"/>
    <property type="evidence" value="ECO:0007669"/>
    <property type="project" value="TreeGrafter"/>
</dbReference>
<dbReference type="GO" id="GO:0036456">
    <property type="term" value="F:L-methionine-(S)-S-oxide reductase activity"/>
    <property type="evidence" value="ECO:0007669"/>
    <property type="project" value="TreeGrafter"/>
</dbReference>
<dbReference type="GO" id="GO:0008113">
    <property type="term" value="F:peptide-methionine (S)-S-oxide reductase activity"/>
    <property type="evidence" value="ECO:0007669"/>
    <property type="project" value="UniProtKB-UniRule"/>
</dbReference>
<dbReference type="GO" id="GO:0034599">
    <property type="term" value="P:cellular response to oxidative stress"/>
    <property type="evidence" value="ECO:0007669"/>
    <property type="project" value="TreeGrafter"/>
</dbReference>
<dbReference type="GO" id="GO:0036211">
    <property type="term" value="P:protein modification process"/>
    <property type="evidence" value="ECO:0007669"/>
    <property type="project" value="UniProtKB-UniRule"/>
</dbReference>
<dbReference type="Gene3D" id="3.30.1060.10">
    <property type="entry name" value="Peptide methionine sulphoxide reductase MsrA"/>
    <property type="match status" value="1"/>
</dbReference>
<dbReference type="HAMAP" id="MF_01401">
    <property type="entry name" value="MsrA"/>
    <property type="match status" value="1"/>
</dbReference>
<dbReference type="InterPro" id="IPR002569">
    <property type="entry name" value="Met_Sox_Rdtase_MsrA_dom"/>
</dbReference>
<dbReference type="InterPro" id="IPR036509">
    <property type="entry name" value="Met_Sox_Rdtase_MsrA_sf"/>
</dbReference>
<dbReference type="InterPro" id="IPR050162">
    <property type="entry name" value="MsrA_MetSO_reductase"/>
</dbReference>
<dbReference type="NCBIfam" id="TIGR00401">
    <property type="entry name" value="msrA"/>
    <property type="match status" value="1"/>
</dbReference>
<dbReference type="PANTHER" id="PTHR42799">
    <property type="entry name" value="MITOCHONDRIAL PEPTIDE METHIONINE SULFOXIDE REDUCTASE"/>
    <property type="match status" value="1"/>
</dbReference>
<dbReference type="PANTHER" id="PTHR42799:SF2">
    <property type="entry name" value="MITOCHONDRIAL PEPTIDE METHIONINE SULFOXIDE REDUCTASE"/>
    <property type="match status" value="1"/>
</dbReference>
<dbReference type="Pfam" id="PF01625">
    <property type="entry name" value="PMSR"/>
    <property type="match status" value="1"/>
</dbReference>
<dbReference type="SUPFAM" id="SSF55068">
    <property type="entry name" value="Peptide methionine sulfoxide reductase"/>
    <property type="match status" value="1"/>
</dbReference>